<evidence type="ECO:0000255" key="1"/>
<evidence type="ECO:0000269" key="2">
    <source>
    </source>
</evidence>
<evidence type="ECO:0000269" key="3">
    <source>
    </source>
</evidence>
<evidence type="ECO:0000269" key="4">
    <source>
    </source>
</evidence>
<evidence type="ECO:0000269" key="5">
    <source>
    </source>
</evidence>
<evidence type="ECO:0000269" key="6">
    <source>
    </source>
</evidence>
<evidence type="ECO:0000269" key="7">
    <source>
    </source>
</evidence>
<evidence type="ECO:0000269" key="8">
    <source>
    </source>
</evidence>
<evidence type="ECO:0000269" key="9">
    <source>
    </source>
</evidence>
<evidence type="ECO:0000269" key="10">
    <source>
    </source>
</evidence>
<evidence type="ECO:0000269" key="11">
    <source>
    </source>
</evidence>
<evidence type="ECO:0000269" key="12">
    <source>
    </source>
</evidence>
<evidence type="ECO:0000305" key="13"/>
<organism>
    <name type="scientific">Phoneutria nigriventer</name>
    <name type="common">Brazilian armed spider</name>
    <name type="synonym">Ctenus nigriventer</name>
    <dbReference type="NCBI Taxonomy" id="6918"/>
    <lineage>
        <taxon>Eukaryota</taxon>
        <taxon>Metazoa</taxon>
        <taxon>Ecdysozoa</taxon>
        <taxon>Arthropoda</taxon>
        <taxon>Chelicerata</taxon>
        <taxon>Arachnida</taxon>
        <taxon>Araneae</taxon>
        <taxon>Araneomorphae</taxon>
        <taxon>Entelegynae</taxon>
        <taxon>Lycosoidea</taxon>
        <taxon>Ctenidae</taxon>
        <taxon>Phoneutria</taxon>
    </lineage>
</organism>
<comment type="function">
    <text evidence="2 3 4 5 8 9 10 11 12">This toxin is a potent and practically irreversible antagonist of both Cav2.1/CACNA1A and Cav2.2/CACNA1B calcium channels, while it displays a partial and rapidly reversible block of Cav2.3/CACNA1E calcium channels and no effect on Cav3/CACNA1 calcium channels. Inhibits glutamate uptake from rat brain synaptosomes by an interaction between cysteines from both glutamate transporter and toxin (PubMed:10923668). Blocks potassium-induced exocytosis of synaptic vesicles in brain cortical synaptosomes (IC(50)=1.1 nM) (PubMed:18524484). In rat brain, inhibits glutamate release, neuronal death and loss of neurotransmission in the hippocampus resulting from ischemia (PubMed:19370546). In vivo, induces rapid general flaccid paralysis followed by death in 10-30 minutes at dose levels of 5 ug per mouse.</text>
</comment>
<comment type="subcellular location">
    <subcellularLocation>
        <location evidence="6">Secreted</location>
    </subcellularLocation>
</comment>
<comment type="tissue specificity">
    <text evidence="6">Expressed by the venom gland.</text>
</comment>
<comment type="domain">
    <text evidence="13">The presence of a 'disulfide through disulfide knot' structurally defines this protein as a knottin.</text>
</comment>
<comment type="mass spectrometry"/>
<comment type="mass spectrometry"/>
<comment type="biotechnology">
    <text evidence="7">Could be used as a diagnostic tool for the autoimmune disease Lambert-Eaton myasthenic syndrome.</text>
</comment>
<comment type="similarity">
    <text evidence="13">Belongs to the neurotoxin 04 (omega-agtx) family. 03 (type II/III omega-agtx) subfamily.</text>
</comment>
<name>TX34_PHONI</name>
<feature type="signal peptide" evidence="1">
    <location>
        <begin position="1"/>
        <end position="19"/>
    </location>
</feature>
<feature type="propeptide" id="PRO_0000285663">
    <location>
        <begin position="20"/>
        <end position="38"/>
    </location>
</feature>
<feature type="chain" id="PRO_0000087613" description="Omega-ctenitoxin-Pn3a">
    <location>
        <begin position="40"/>
        <end position="115"/>
    </location>
</feature>
<feature type="modified residue" description="Histidine amide" evidence="12">
    <location>
        <position position="115"/>
    </location>
</feature>
<feature type="disulfide bond" evidence="13">
    <location>
        <begin position="41"/>
        <end position="58"/>
    </location>
</feature>
<feature type="disulfide bond" evidence="13">
    <location>
        <begin position="48"/>
        <end position="64"/>
    </location>
</feature>
<feature type="disulfide bond" evidence="13">
    <location>
        <begin position="55"/>
        <end position="90"/>
    </location>
</feature>
<feature type="disulfide bond" evidence="13">
    <location>
        <begin position="57"/>
        <end position="78"/>
    </location>
</feature>
<feature type="disulfide bond" evidence="13">
    <location>
        <begin position="66"/>
        <end position="76"/>
    </location>
</feature>
<feature type="disulfide bond" evidence="1">
    <location>
        <begin position="96"/>
        <end position="102"/>
    </location>
</feature>
<feature type="disulfide bond" evidence="1">
    <location>
        <begin position="106"/>
        <end position="111"/>
    </location>
</feature>
<feature type="sequence conflict" description="In Ref. 4; AA sequence." evidence="13" ref="4">
    <original>D</original>
    <variation>C</variation>
    <location>
        <position position="54"/>
    </location>
</feature>
<feature type="sequence conflict" description="In Ref. 4; AA sequence." evidence="13" ref="4">
    <original>C</original>
    <variation>D</variation>
    <location>
        <position position="58"/>
    </location>
</feature>
<keyword id="KW-0027">Amidation</keyword>
<keyword id="KW-0108">Calcium channel impairing toxin</keyword>
<keyword id="KW-0903">Direct protein sequencing</keyword>
<keyword id="KW-1015">Disulfide bond</keyword>
<keyword id="KW-0872">Ion channel impairing toxin</keyword>
<keyword id="KW-0960">Knottin</keyword>
<keyword id="KW-0528">Neurotoxin</keyword>
<keyword id="KW-0964">Secreted</keyword>
<keyword id="KW-0732">Signal</keyword>
<keyword id="KW-0800">Toxin</keyword>
<keyword id="KW-1218">Voltage-gated calcium channel impairing toxin</keyword>
<dbReference type="PIR" id="D44336">
    <property type="entry name" value="D44336"/>
</dbReference>
<dbReference type="SMR" id="P81790"/>
<dbReference type="TCDB" id="8.B.19.2.8">
    <property type="family name" value="the sea anemone k+ channel blocker toxin, bcstx3 (bcstx3) family"/>
</dbReference>
<dbReference type="ArachnoServer" id="AS000262">
    <property type="toxin name" value="omega-ctenitoxin-Pn3a"/>
</dbReference>
<dbReference type="GO" id="GO:0005576">
    <property type="term" value="C:extracellular region"/>
    <property type="evidence" value="ECO:0007669"/>
    <property type="project" value="UniProtKB-SubCell"/>
</dbReference>
<dbReference type="GO" id="GO:0005246">
    <property type="term" value="F:calcium channel regulator activity"/>
    <property type="evidence" value="ECO:0007669"/>
    <property type="project" value="UniProtKB-KW"/>
</dbReference>
<dbReference type="GO" id="GO:0090729">
    <property type="term" value="F:toxin activity"/>
    <property type="evidence" value="ECO:0007669"/>
    <property type="project" value="UniProtKB-KW"/>
</dbReference>
<dbReference type="InterPro" id="IPR005853">
    <property type="entry name" value="Omega-agatoxin_II/III_CS"/>
</dbReference>
<dbReference type="InterPro" id="IPR013605">
    <property type="entry name" value="Toxin_34"/>
</dbReference>
<dbReference type="Pfam" id="PF08396">
    <property type="entry name" value="Toxin_34"/>
    <property type="match status" value="1"/>
</dbReference>
<dbReference type="PROSITE" id="PS60023">
    <property type="entry name" value="OMEGA_AGA_II_III"/>
    <property type="match status" value="1"/>
</dbReference>
<sequence>MKMKLLGIILLVSFPFVLGFAGIPIEEGENSVEVGEVERSCINVGDFCDGKKDDCQCCRDNAFCSCSVIFGYKTNCRCEVGTTATSYGICMAKHKCGRQTTCTKPCLSKRCKKNHG</sequence>
<protein>
    <recommendedName>
        <fullName>Omega-ctenitoxin-Pn3a</fullName>
        <shortName>Omega-CNTX-Pn3a</shortName>
    </recommendedName>
    <alternativeName>
        <fullName>Neurotoxin Tx3-4</fullName>
    </alternativeName>
    <alternativeName>
        <fullName>Omega-phonetoxin-2A</fullName>
    </alternativeName>
    <alternativeName>
        <fullName>Omega-phonetoxin-IIA</fullName>
        <shortName>Omega-Ptx-IIA</shortName>
    </alternativeName>
    <alternativeName>
        <fullName>PF3</fullName>
    </alternativeName>
    <alternativeName>
        <fullName>Phoneutriatoxin 3-4</fullName>
    </alternativeName>
    <alternativeName>
        <fullName>Pn3-4A</fullName>
    </alternativeName>
</protein>
<proteinExistence type="evidence at protein level"/>
<reference key="1">
    <citation type="journal article" date="2003" name="Toxicon">
        <title>Molecular cloning and characterization of Phoneutria nigriventer toxins active on calcium channels.</title>
        <authorList>
            <person name="Cardoso F.C."/>
            <person name="Pacifico L.G."/>
            <person name="Carvalho D.C."/>
            <person name="Victoria J.M.N."/>
            <person name="Neves A.L.G."/>
            <person name="Chavez-Olortegui C."/>
            <person name="Gomez M.V."/>
            <person name="Kalapothakis E."/>
        </authorList>
    </citation>
    <scope>NUCLEOTIDE SEQUENCE [MRNA]</scope>
    <source>
        <tissue>Venom gland</tissue>
    </source>
</reference>
<reference key="2">
    <citation type="journal article" date="1998" name="Pflugers Arch.">
        <title>Omega-phonetoxin-IIA: a calcium channel blocker from the spider Phoneutria nigriventer.</title>
        <authorList>
            <person name="Cassola A.C."/>
            <person name="Jaffe H."/>
            <person name="Fales H.M."/>
            <person name="Castro-Afeche S."/>
            <person name="Magnoli F."/>
            <person name="Cipolla-Neto J."/>
        </authorList>
    </citation>
    <scope>PROTEIN SEQUENCE OF 40-115</scope>
    <scope>MASS SPECTROMETRY</scope>
    <scope>FUNCTION</scope>
    <scope>AMIDATION AT HIS-115</scope>
    <source>
        <tissue>Venom</tissue>
    </source>
</reference>
<reference key="3">
    <citation type="journal article" date="2006" name="Comp. Biochem. Physiol.">
        <title>Comparison of the partial proteomes of the venoms of Brazilian spiders of the genus Phoneutria.</title>
        <authorList>
            <person name="Richardson M."/>
            <person name="Pimenta A.M."/>
            <person name="Bemquerer M.P."/>
            <person name="Santoro M.M."/>
            <person name="Beirao P.S."/>
            <person name="Lima M.E."/>
            <person name="Figueiredo S.G."/>
            <person name="Bloch C. Jr."/>
            <person name="Vasconcelos E.A."/>
            <person name="Campos F.A."/>
            <person name="Gomes P.C."/>
            <person name="Cordeiro M.N."/>
        </authorList>
    </citation>
    <scope>PROTEIN SEQUENCE OF 40-115</scope>
    <scope>SUBCELLULAR LOCATION</scope>
    <scope>TISSUE SPECIFICITY</scope>
    <scope>MASS SPECTROMETRY</scope>
    <source>
        <tissue>Venom</tissue>
    </source>
</reference>
<reference key="4">
    <citation type="journal article" date="1993" name="Toxicon">
        <title>Purification and amino acid sequences of six Tx3 type neurotoxins from the venom of the Brazilian 'armed' spider Phoneutria nigriventer (Keys).</title>
        <authorList>
            <person name="Cordeiro M.N."/>
            <person name="De Figueiredo S.G."/>
            <person name="Valentim A.D.C."/>
            <person name="Diniz C.R."/>
            <person name="von Eickstedt V.R.D."/>
            <person name="Gilroy J."/>
            <person name="Richardson M."/>
        </authorList>
    </citation>
    <scope>PROTEIN SEQUENCE OF 40-79</scope>
    <scope>FUNCTION</scope>
    <source>
        <tissue>Venom</tissue>
    </source>
</reference>
<reference key="5">
    <citation type="journal article" date="1998" name="NeuroReport">
        <title>Phoneutria nigriventer toxins block tityustoxin-induced calcium influx in synaptosomes.</title>
        <authorList>
            <person name="Miranda D.M."/>
            <person name="Romano-Silva M.A."/>
            <person name="Kalapothakis E."/>
            <person name="Diniz C.R."/>
            <person name="Cordeiro M.N."/>
            <person name="Santos T.M."/>
            <person name="Prado M.A.M."/>
            <person name="Gomez M.V."/>
        </authorList>
    </citation>
    <scope>FUNCTION</scope>
    <source>
        <tissue>Venom</tissue>
    </source>
</reference>
<reference key="6">
    <citation type="journal article" date="1999" name="Biochem. J.">
        <title>Inhibition of glutamate uptake by a polypeptide toxin (phoneutriatoxin 3-4) from the spider Phoneutria nigriventer.</title>
        <authorList>
            <person name="Reis H.J."/>
            <person name="Prado M.A.M."/>
            <person name="Kalapothakis E."/>
            <person name="Cordeiro M.N."/>
            <person name="Diniz C.R."/>
            <person name="De Marco L.A."/>
            <person name="Gomez M.V."/>
            <person name="Romano-Silva M.A."/>
        </authorList>
    </citation>
    <scope>FUNCTION</scope>
    <source>
        <tissue>Venom</tissue>
    </source>
</reference>
<reference key="7">
    <citation type="journal article" date="2000" name="NeuroReport">
        <title>Inhibition of glutamate uptake by Tx3-4 is dependent on the redox state of cysteine residues.</title>
        <authorList>
            <person name="Reis H.J."/>
            <person name="Gomez M.V."/>
            <person name="Kalapothakis E."/>
            <person name="Diniz C.R."/>
            <person name="Cordeiro M.N."/>
            <person name="Prado M.A.M."/>
            <person name="Romano-Silva M.A."/>
        </authorList>
    </citation>
    <scope>FUNCTION</scope>
    <source>
        <tissue>Venom</tissue>
    </source>
</reference>
<reference key="8">
    <citation type="journal article" date="2001" name="Brain Res. Bull.">
        <title>Spider neurotoxins block the beta scorpion toxin-induced calcium uptake in rat brain cortical synaptosomes.</title>
        <authorList>
            <person name="Miranda D.M."/>
            <person name="Romano-Silva M.A."/>
            <person name="Kalapothakis E."/>
            <person name="Diniz C.R."/>
            <person name="Cordeiro M.N."/>
            <person name="Moraes-Santos T."/>
            <person name="De Marco L.A."/>
            <person name="Prado M.A.M."/>
            <person name="Gomez M.V."/>
        </authorList>
    </citation>
    <scope>FUNCTION</scope>
    <source>
        <tissue>Venom</tissue>
    </source>
</reference>
<reference key="9">
    <citation type="journal article" date="2002" name="J. Biol. Chem.">
        <title>Phoneutria nigriventer omega-phonetoxin IIA blocks the Cav2 family of calcium channels and interacts with omega-conotoxin-binding sites.</title>
        <authorList>
            <person name="Dos Santos R.G."/>
            <person name="Van Renterghem C."/>
            <person name="Martin-Moutot N."/>
            <person name="Mansuelle P."/>
            <person name="Cordeiro M.N."/>
            <person name="Diniz C.R."/>
            <person name="Mori Y."/>
            <person name="De Lima M.E."/>
            <person name="Seagar M."/>
        </authorList>
    </citation>
    <scope>FUNCTION</scope>
    <source>
        <tissue>Venom</tissue>
    </source>
</reference>
<reference key="10">
    <citation type="journal article" date="2006" name="Neurobiol. Dis.">
        <title>Phoneutria nigriventer omega-Phonetoxin IIA: a new tool for anti-calcium channel autoantibody assays in Lambert-Eaton myasthenic syndrome.</title>
        <authorList>
            <person name="Martin-Moutot N."/>
            <person name="Haro L."/>
            <person name="Santos R.G."/>
            <person name="Mori Y."/>
            <person name="Seagar M."/>
        </authorList>
    </citation>
    <scope>BIOTECHNOLOGY</scope>
</reference>
<reference key="11">
    <citation type="journal article" date="2008" name="Neurosci. Lett.">
        <title>Tx3-4 a toxin from the venom of spider Phoneutria nigriventer blocks calcium channels associated with exocytosis.</title>
        <authorList>
            <person name="de Castro Junior C.J."/>
            <person name="Pinheiro A.C."/>
            <person name="Guatimosim C."/>
            <person name="Cordeiro M.N."/>
            <person name="Souza A.H."/>
            <person name="Richardson M."/>
            <person name="Romano-Silva M.A."/>
            <person name="Prado M.A."/>
            <person name="Gomez M.V."/>
        </authorList>
    </citation>
    <scope>FUNCTION</scope>
</reference>
<reference key="12">
    <citation type="journal article" date="2009" name="Hippocampus">
        <title>Phoneutria spider toxins block ischemia-induced glutamate release, neuronal death, and loss of neurotransmission in hippocampus.</title>
        <authorList>
            <person name="Pinheiro A.C."/>
            <person name="da Silva A.J."/>
            <person name="Prado M.A."/>
            <person name="Cordeiro M.D."/>
            <person name="Richardson M."/>
            <person name="Batista M.C."/>
            <person name="de Castro Junior C.J."/>
            <person name="Massensini A.R."/>
            <person name="Guatimosim C."/>
            <person name="Romano-Silva M.A."/>
            <person name="Kushmerick C."/>
            <person name="Gomez M.V."/>
        </authorList>
    </citation>
    <scope>FUNCTION</scope>
</reference>
<accession>P81790</accession>